<name>NB5R2_RAT</name>
<keyword id="KW-0007">Acetylation</keyword>
<keyword id="KW-0274">FAD</keyword>
<keyword id="KW-0285">Flavoprotein</keyword>
<keyword id="KW-0444">Lipid biosynthesis</keyword>
<keyword id="KW-0443">Lipid metabolism</keyword>
<keyword id="KW-0520">NAD</keyword>
<keyword id="KW-0560">Oxidoreductase</keyword>
<keyword id="KW-0597">Phosphoprotein</keyword>
<keyword id="KW-1185">Reference proteome</keyword>
<keyword id="KW-0752">Steroid biosynthesis</keyword>
<keyword id="KW-0753">Steroid metabolism</keyword>
<keyword id="KW-0756">Sterol biosynthesis</keyword>
<keyword id="KW-1207">Sterol metabolism</keyword>
<evidence type="ECO:0000250" key="1"/>
<evidence type="ECO:0000250" key="2">
    <source>
        <dbReference type="UniProtKB" id="P00387"/>
    </source>
</evidence>
<evidence type="ECO:0000255" key="3">
    <source>
        <dbReference type="PROSITE-ProRule" id="PRU00716"/>
    </source>
</evidence>
<evidence type="ECO:0000305" key="4"/>
<gene>
    <name type="primary">Cyb5r2</name>
</gene>
<protein>
    <recommendedName>
        <fullName>NADH-cytochrome b5 reductase 2</fullName>
        <shortName>b5R.2</shortName>
        <ecNumber>1.6.2.2</ecNumber>
    </recommendedName>
</protein>
<accession>Q6AY12</accession>
<comment type="function">
    <text evidence="1">NADH-cytochrome b5 reductases are involved in desaturation and elongation of fatty acids, cholesterol biosynthesis, drug metabolism, and, in erythrocyte, methemoglobin reduction. Responsible for NADH-dependent lucigenin chemiluminescence in spermatozoa by reducing both lucigenin and 2-[4-iodophenyl]-3-[4-nitrophenyl]-5-[2,4-disulfophenyl]-2H tetrazolium monosodium salt (WST-1) (By similarity).</text>
</comment>
<comment type="catalytic activity">
    <reaction>
        <text>2 Fe(III)-[cytochrome b5] + NADH = 2 Fe(II)-[cytochrome b5] + NAD(+) + H(+)</text>
        <dbReference type="Rhea" id="RHEA:46680"/>
        <dbReference type="Rhea" id="RHEA-COMP:10438"/>
        <dbReference type="Rhea" id="RHEA-COMP:10439"/>
        <dbReference type="ChEBI" id="CHEBI:15378"/>
        <dbReference type="ChEBI" id="CHEBI:29033"/>
        <dbReference type="ChEBI" id="CHEBI:29034"/>
        <dbReference type="ChEBI" id="CHEBI:57540"/>
        <dbReference type="ChEBI" id="CHEBI:57945"/>
        <dbReference type="EC" id="1.6.2.2"/>
    </reaction>
</comment>
<comment type="cofactor">
    <cofactor evidence="1">
        <name>FAD</name>
        <dbReference type="ChEBI" id="CHEBI:57692"/>
    </cofactor>
</comment>
<comment type="similarity">
    <text evidence="4">Belongs to the flavoprotein pyridine nucleotide cytochrome reductase family.</text>
</comment>
<reference key="1">
    <citation type="journal article" date="2004" name="Genome Res.">
        <title>The status, quality, and expansion of the NIH full-length cDNA project: the Mammalian Gene Collection (MGC).</title>
        <authorList>
            <consortium name="The MGC Project Team"/>
        </authorList>
    </citation>
    <scope>NUCLEOTIDE SEQUENCE [LARGE SCALE MRNA]</scope>
    <source>
        <tissue>Testis</tissue>
    </source>
</reference>
<proteinExistence type="evidence at transcript level"/>
<feature type="chain" id="PRO_0000287550" description="NADH-cytochrome b5 reductase 2">
    <location>
        <begin position="1"/>
        <end position="276"/>
    </location>
</feature>
<feature type="domain" description="FAD-binding FR-type" evidence="3">
    <location>
        <begin position="15"/>
        <end position="127"/>
    </location>
</feature>
<feature type="binding site" evidence="1">
    <location>
        <begin position="107"/>
        <end position="137"/>
    </location>
    <ligand>
        <name>FAD</name>
        <dbReference type="ChEBI" id="CHEBI:57692"/>
    </ligand>
</feature>
<feature type="binding site" evidence="1">
    <location>
        <begin position="146"/>
        <end position="181"/>
    </location>
    <ligand>
        <name>FAD</name>
        <dbReference type="ChEBI" id="CHEBI:57692"/>
    </ligand>
</feature>
<feature type="modified residue" description="N6-acetyllysine" evidence="2">
    <location>
        <position position="17"/>
    </location>
</feature>
<feature type="modified residue" description="Phosphotyrosine" evidence="2">
    <location>
        <position position="18"/>
    </location>
</feature>
<organism>
    <name type="scientific">Rattus norvegicus</name>
    <name type="common">Rat</name>
    <dbReference type="NCBI Taxonomy" id="10116"/>
    <lineage>
        <taxon>Eukaryota</taxon>
        <taxon>Metazoa</taxon>
        <taxon>Chordata</taxon>
        <taxon>Craniata</taxon>
        <taxon>Vertebrata</taxon>
        <taxon>Euteleostomi</taxon>
        <taxon>Mammalia</taxon>
        <taxon>Eutheria</taxon>
        <taxon>Euarchontoglires</taxon>
        <taxon>Glires</taxon>
        <taxon>Rodentia</taxon>
        <taxon>Myomorpha</taxon>
        <taxon>Muroidea</taxon>
        <taxon>Muridae</taxon>
        <taxon>Murinae</taxon>
        <taxon>Rattus</taxon>
    </lineage>
</organism>
<sequence>MSVKKKDLITLQDPEAKYPLPLIEKEQINHNTRRFRFGLPSPDHVLGLPVGNYVHLLAQINNELVIRAYTPVSSDDDQGFVDLIIKIYFKNVHPKYPEGGKMTQYLENMKIGDTILFRGPTGRLFYNEPGTLLIKTDKTSEPEKKLVHHLGMIAGGTGITPMLQLIRHITKDTSDGTRMSLLFANQTEEDILLRKELEEVATTHQNQFSLWYTLDRPPSGWEYSSGFITADMIKEHLPPPGEATLILVCGPPPLIQEAAHPSLEQLGYTKDMIFTY</sequence>
<dbReference type="EC" id="1.6.2.2"/>
<dbReference type="EMBL" id="BC079235">
    <property type="protein sequence ID" value="AAH79235.1"/>
    <property type="molecule type" value="mRNA"/>
</dbReference>
<dbReference type="RefSeq" id="NP_001014266.1">
    <property type="nucleotide sequence ID" value="NM_001014244.1"/>
</dbReference>
<dbReference type="SMR" id="Q6AY12"/>
<dbReference type="FunCoup" id="Q6AY12">
    <property type="interactions" value="840"/>
</dbReference>
<dbReference type="STRING" id="10116.ENSRNOP00000075603"/>
<dbReference type="PhosphoSitePlus" id="Q6AY12"/>
<dbReference type="jPOST" id="Q6AY12"/>
<dbReference type="PaxDb" id="10116-ENSRNOP00000026744"/>
<dbReference type="GeneID" id="365345"/>
<dbReference type="KEGG" id="rno:365345"/>
<dbReference type="UCSC" id="RGD:1308421">
    <property type="organism name" value="rat"/>
</dbReference>
<dbReference type="AGR" id="RGD:1308421"/>
<dbReference type="CTD" id="51700"/>
<dbReference type="RGD" id="1308421">
    <property type="gene designation" value="Cyb5r2"/>
</dbReference>
<dbReference type="VEuPathDB" id="HostDB:ENSRNOG00000019751"/>
<dbReference type="eggNOG" id="KOG0534">
    <property type="taxonomic scope" value="Eukaryota"/>
</dbReference>
<dbReference type="HOGENOM" id="CLU_003827_9_2_1"/>
<dbReference type="InParanoid" id="Q6AY12"/>
<dbReference type="PhylomeDB" id="Q6AY12"/>
<dbReference type="Reactome" id="R-RNO-1237044">
    <property type="pathway name" value="Erythrocytes take up carbon dioxide and release oxygen"/>
</dbReference>
<dbReference type="PRO" id="PR:Q6AY12"/>
<dbReference type="Proteomes" id="UP000002494">
    <property type="component" value="Chromosome 1"/>
</dbReference>
<dbReference type="Bgee" id="ENSRNOG00000019751">
    <property type="expression patterns" value="Expressed in testis and 18 other cell types or tissues"/>
</dbReference>
<dbReference type="ExpressionAtlas" id="Q6AY12">
    <property type="expression patterns" value="baseline and differential"/>
</dbReference>
<dbReference type="GO" id="GO:0005789">
    <property type="term" value="C:endoplasmic reticulum membrane"/>
    <property type="evidence" value="ECO:0007669"/>
    <property type="project" value="UniProtKB-ARBA"/>
</dbReference>
<dbReference type="GO" id="GO:0016020">
    <property type="term" value="C:membrane"/>
    <property type="evidence" value="ECO:0000266"/>
    <property type="project" value="RGD"/>
</dbReference>
<dbReference type="GO" id="GO:0005739">
    <property type="term" value="C:mitochondrion"/>
    <property type="evidence" value="ECO:0000318"/>
    <property type="project" value="GO_Central"/>
</dbReference>
<dbReference type="GO" id="GO:0004128">
    <property type="term" value="F:cytochrome-b5 reductase activity, acting on NAD(P)H"/>
    <property type="evidence" value="ECO:0000266"/>
    <property type="project" value="RGD"/>
</dbReference>
<dbReference type="GO" id="GO:0071949">
    <property type="term" value="F:FAD binding"/>
    <property type="evidence" value="ECO:0000318"/>
    <property type="project" value="GO_Central"/>
</dbReference>
<dbReference type="GO" id="GO:0016126">
    <property type="term" value="P:sterol biosynthetic process"/>
    <property type="evidence" value="ECO:0007669"/>
    <property type="project" value="UniProtKB-KW"/>
</dbReference>
<dbReference type="CDD" id="cd06183">
    <property type="entry name" value="cyt_b5_reduct_like"/>
    <property type="match status" value="1"/>
</dbReference>
<dbReference type="FunFam" id="2.40.30.10:FF:000021">
    <property type="entry name" value="NADH-cytochrome b5 reductase"/>
    <property type="match status" value="1"/>
</dbReference>
<dbReference type="FunFam" id="3.40.50.80:FF:000005">
    <property type="entry name" value="NADH-cytochrome b5 reductase"/>
    <property type="match status" value="1"/>
</dbReference>
<dbReference type="Gene3D" id="3.40.50.80">
    <property type="entry name" value="Nucleotide-binding domain of ferredoxin-NADP reductase (FNR) module"/>
    <property type="match status" value="1"/>
</dbReference>
<dbReference type="Gene3D" id="2.40.30.10">
    <property type="entry name" value="Translation factors"/>
    <property type="match status" value="1"/>
</dbReference>
<dbReference type="InterPro" id="IPR001834">
    <property type="entry name" value="CBR-like"/>
</dbReference>
<dbReference type="InterPro" id="IPR008333">
    <property type="entry name" value="Cbr1-like_FAD-bd_dom"/>
</dbReference>
<dbReference type="InterPro" id="IPR017927">
    <property type="entry name" value="FAD-bd_FR_type"/>
</dbReference>
<dbReference type="InterPro" id="IPR001709">
    <property type="entry name" value="Flavoprot_Pyr_Nucl_cyt_Rdtase"/>
</dbReference>
<dbReference type="InterPro" id="IPR039261">
    <property type="entry name" value="FNR_nucleotide-bd"/>
</dbReference>
<dbReference type="InterPro" id="IPR001433">
    <property type="entry name" value="OxRdtase_FAD/NAD-bd"/>
</dbReference>
<dbReference type="InterPro" id="IPR017938">
    <property type="entry name" value="Riboflavin_synthase-like_b-brl"/>
</dbReference>
<dbReference type="PANTHER" id="PTHR19370">
    <property type="entry name" value="NADH-CYTOCHROME B5 REDUCTASE"/>
    <property type="match status" value="1"/>
</dbReference>
<dbReference type="PANTHER" id="PTHR19370:SF108">
    <property type="entry name" value="NADH-CYTOCHROME B5 REDUCTASE 2"/>
    <property type="match status" value="1"/>
</dbReference>
<dbReference type="Pfam" id="PF00970">
    <property type="entry name" value="FAD_binding_6"/>
    <property type="match status" value="1"/>
</dbReference>
<dbReference type="Pfam" id="PF00175">
    <property type="entry name" value="NAD_binding_1"/>
    <property type="match status" value="1"/>
</dbReference>
<dbReference type="PRINTS" id="PR00406">
    <property type="entry name" value="CYTB5RDTASE"/>
</dbReference>
<dbReference type="PRINTS" id="PR00371">
    <property type="entry name" value="FPNCR"/>
</dbReference>
<dbReference type="SUPFAM" id="SSF52343">
    <property type="entry name" value="Ferredoxin reductase-like, C-terminal NADP-linked domain"/>
    <property type="match status" value="1"/>
</dbReference>
<dbReference type="SUPFAM" id="SSF63380">
    <property type="entry name" value="Riboflavin synthase domain-like"/>
    <property type="match status" value="1"/>
</dbReference>
<dbReference type="PROSITE" id="PS51384">
    <property type="entry name" value="FAD_FR"/>
    <property type="match status" value="1"/>
</dbReference>